<evidence type="ECO:0000255" key="1">
    <source>
        <dbReference type="HAMAP-Rule" id="MF_00131"/>
    </source>
</evidence>
<protein>
    <recommendedName>
        <fullName evidence="1">Tryptophan synthase alpha chain</fullName>
        <ecNumber evidence="1">4.2.1.20</ecNumber>
    </recommendedName>
</protein>
<accession>B5XT03</accession>
<comment type="function">
    <text evidence="1">The alpha subunit is responsible for the aldol cleavage of indoleglycerol phosphate to indole and glyceraldehyde 3-phosphate.</text>
</comment>
<comment type="catalytic activity">
    <reaction evidence="1">
        <text>(1S,2R)-1-C-(indol-3-yl)glycerol 3-phosphate + L-serine = D-glyceraldehyde 3-phosphate + L-tryptophan + H2O</text>
        <dbReference type="Rhea" id="RHEA:10532"/>
        <dbReference type="ChEBI" id="CHEBI:15377"/>
        <dbReference type="ChEBI" id="CHEBI:33384"/>
        <dbReference type="ChEBI" id="CHEBI:57912"/>
        <dbReference type="ChEBI" id="CHEBI:58866"/>
        <dbReference type="ChEBI" id="CHEBI:59776"/>
        <dbReference type="EC" id="4.2.1.20"/>
    </reaction>
</comment>
<comment type="pathway">
    <text evidence="1">Amino-acid biosynthesis; L-tryptophan biosynthesis; L-tryptophan from chorismate: step 5/5.</text>
</comment>
<comment type="subunit">
    <text evidence="1">Tetramer of two alpha and two beta chains.</text>
</comment>
<comment type="similarity">
    <text evidence="1">Belongs to the TrpA family.</text>
</comment>
<proteinExistence type="inferred from homology"/>
<name>TRPA_KLEP3</name>
<organism>
    <name type="scientific">Klebsiella pneumoniae (strain 342)</name>
    <dbReference type="NCBI Taxonomy" id="507522"/>
    <lineage>
        <taxon>Bacteria</taxon>
        <taxon>Pseudomonadati</taxon>
        <taxon>Pseudomonadota</taxon>
        <taxon>Gammaproteobacteria</taxon>
        <taxon>Enterobacterales</taxon>
        <taxon>Enterobacteriaceae</taxon>
        <taxon>Klebsiella/Raoultella group</taxon>
        <taxon>Klebsiella</taxon>
        <taxon>Klebsiella pneumoniae complex</taxon>
    </lineage>
</organism>
<dbReference type="EC" id="4.2.1.20" evidence="1"/>
<dbReference type="EMBL" id="CP000964">
    <property type="protein sequence ID" value="ACI10524.1"/>
    <property type="molecule type" value="Genomic_DNA"/>
</dbReference>
<dbReference type="SMR" id="B5XT03"/>
<dbReference type="KEGG" id="kpe:KPK_3183"/>
<dbReference type="HOGENOM" id="CLU_016734_0_4_6"/>
<dbReference type="UniPathway" id="UPA00035">
    <property type="reaction ID" value="UER00044"/>
</dbReference>
<dbReference type="Proteomes" id="UP000001734">
    <property type="component" value="Chromosome"/>
</dbReference>
<dbReference type="GO" id="GO:0005829">
    <property type="term" value="C:cytosol"/>
    <property type="evidence" value="ECO:0007669"/>
    <property type="project" value="TreeGrafter"/>
</dbReference>
<dbReference type="GO" id="GO:0004834">
    <property type="term" value="F:tryptophan synthase activity"/>
    <property type="evidence" value="ECO:0007669"/>
    <property type="project" value="UniProtKB-UniRule"/>
</dbReference>
<dbReference type="CDD" id="cd04724">
    <property type="entry name" value="Tryptophan_synthase_alpha"/>
    <property type="match status" value="1"/>
</dbReference>
<dbReference type="FunFam" id="3.20.20.70:FF:000037">
    <property type="entry name" value="Tryptophan synthase alpha chain"/>
    <property type="match status" value="1"/>
</dbReference>
<dbReference type="Gene3D" id="3.20.20.70">
    <property type="entry name" value="Aldolase class I"/>
    <property type="match status" value="1"/>
</dbReference>
<dbReference type="HAMAP" id="MF_00131">
    <property type="entry name" value="Trp_synth_alpha"/>
    <property type="match status" value="1"/>
</dbReference>
<dbReference type="InterPro" id="IPR013785">
    <property type="entry name" value="Aldolase_TIM"/>
</dbReference>
<dbReference type="InterPro" id="IPR011060">
    <property type="entry name" value="RibuloseP-bd_barrel"/>
</dbReference>
<dbReference type="InterPro" id="IPR018204">
    <property type="entry name" value="Trp_synthase_alpha_AS"/>
</dbReference>
<dbReference type="InterPro" id="IPR002028">
    <property type="entry name" value="Trp_synthase_suA"/>
</dbReference>
<dbReference type="NCBIfam" id="TIGR00262">
    <property type="entry name" value="trpA"/>
    <property type="match status" value="1"/>
</dbReference>
<dbReference type="PANTHER" id="PTHR43406:SF1">
    <property type="entry name" value="TRYPTOPHAN SYNTHASE ALPHA CHAIN, CHLOROPLASTIC"/>
    <property type="match status" value="1"/>
</dbReference>
<dbReference type="PANTHER" id="PTHR43406">
    <property type="entry name" value="TRYPTOPHAN SYNTHASE, ALPHA CHAIN"/>
    <property type="match status" value="1"/>
</dbReference>
<dbReference type="Pfam" id="PF00290">
    <property type="entry name" value="Trp_syntA"/>
    <property type="match status" value="1"/>
</dbReference>
<dbReference type="SUPFAM" id="SSF51366">
    <property type="entry name" value="Ribulose-phoshate binding barrel"/>
    <property type="match status" value="1"/>
</dbReference>
<dbReference type="PROSITE" id="PS00167">
    <property type="entry name" value="TRP_SYNTHASE_ALPHA"/>
    <property type="match status" value="1"/>
</dbReference>
<keyword id="KW-0028">Amino-acid biosynthesis</keyword>
<keyword id="KW-0057">Aromatic amino acid biosynthesis</keyword>
<keyword id="KW-0456">Lyase</keyword>
<keyword id="KW-0822">Tryptophan biosynthesis</keyword>
<feature type="chain" id="PRO_1000095724" description="Tryptophan synthase alpha chain">
    <location>
        <begin position="1"/>
        <end position="269"/>
    </location>
</feature>
<feature type="active site" description="Proton acceptor" evidence="1">
    <location>
        <position position="49"/>
    </location>
</feature>
<feature type="active site" description="Proton acceptor" evidence="1">
    <location>
        <position position="60"/>
    </location>
</feature>
<sequence length="269" mass="28544">MERYETLFAQLKNRQEGAFVPFVTLGDPGPEQSLKIIDALIEGGADALELGIPFSDPLADGPTIQGAALRAFAAGVTPAQCFEMLAAIRQKHPTIPIGLLMYANLVFSPGIDAFYAQCARVGVDSVLVADVPVEESAPFRQAAMRHNIAPIFICPPNADDDLLRQIASYGRGYTYLLSRAGVTGAENRAALPLHHLVEKLAEYHAAPPLQGFGISAPEQVSAAIDAGAAGAISGSAIVKIIERHLDEPQTMLDELKAFVQSLKAATKTA</sequence>
<reference key="1">
    <citation type="journal article" date="2008" name="PLoS Genet.">
        <title>Complete genome sequence of the N2-fixing broad host range endophyte Klebsiella pneumoniae 342 and virulence predictions verified in mice.</title>
        <authorList>
            <person name="Fouts D.E."/>
            <person name="Tyler H.L."/>
            <person name="DeBoy R.T."/>
            <person name="Daugherty S."/>
            <person name="Ren Q."/>
            <person name="Badger J.H."/>
            <person name="Durkin A.S."/>
            <person name="Huot H."/>
            <person name="Shrivastava S."/>
            <person name="Kothari S."/>
            <person name="Dodson R.J."/>
            <person name="Mohamoud Y."/>
            <person name="Khouri H."/>
            <person name="Roesch L.F.W."/>
            <person name="Krogfelt K.A."/>
            <person name="Struve C."/>
            <person name="Triplett E.W."/>
            <person name="Methe B.A."/>
        </authorList>
    </citation>
    <scope>NUCLEOTIDE SEQUENCE [LARGE SCALE GENOMIC DNA]</scope>
    <source>
        <strain>342</strain>
    </source>
</reference>
<gene>
    <name evidence="1" type="primary">trpA</name>
    <name type="ordered locus">KPK_3183</name>
</gene>